<organism>
    <name type="scientific">Escherichia fergusonii (strain ATCC 35469 / DSM 13698 / CCUG 18766 / IAM 14443 / JCM 21226 / LMG 7866 / NBRC 102419 / NCTC 12128 / CDC 0568-73)</name>
    <dbReference type="NCBI Taxonomy" id="585054"/>
    <lineage>
        <taxon>Bacteria</taxon>
        <taxon>Pseudomonadati</taxon>
        <taxon>Pseudomonadota</taxon>
        <taxon>Gammaproteobacteria</taxon>
        <taxon>Enterobacterales</taxon>
        <taxon>Enterobacteriaceae</taxon>
        <taxon>Escherichia</taxon>
    </lineage>
</organism>
<comment type="function">
    <text evidence="1">Catalyzes the conversion of D-ribulose 5-phosphate to formate and 3,4-dihydroxy-2-butanone 4-phosphate.</text>
</comment>
<comment type="catalytic activity">
    <reaction evidence="1">
        <text>D-ribulose 5-phosphate = (2S)-2-hydroxy-3-oxobutyl phosphate + formate + H(+)</text>
        <dbReference type="Rhea" id="RHEA:18457"/>
        <dbReference type="ChEBI" id="CHEBI:15378"/>
        <dbReference type="ChEBI" id="CHEBI:15740"/>
        <dbReference type="ChEBI" id="CHEBI:58121"/>
        <dbReference type="ChEBI" id="CHEBI:58830"/>
        <dbReference type="EC" id="4.1.99.12"/>
    </reaction>
</comment>
<comment type="cofactor">
    <cofactor evidence="1">
        <name>Mg(2+)</name>
        <dbReference type="ChEBI" id="CHEBI:18420"/>
    </cofactor>
    <cofactor evidence="1">
        <name>Mn(2+)</name>
        <dbReference type="ChEBI" id="CHEBI:29035"/>
    </cofactor>
    <text evidence="1">Binds 2 divalent metal cations per subunit. Magnesium or manganese.</text>
</comment>
<comment type="pathway">
    <text evidence="1">Cofactor biosynthesis; riboflavin biosynthesis; 2-hydroxy-3-oxobutyl phosphate from D-ribulose 5-phosphate: step 1/1.</text>
</comment>
<comment type="subunit">
    <text evidence="1">Homodimer.</text>
</comment>
<comment type="similarity">
    <text evidence="1">Belongs to the DHBP synthase family.</text>
</comment>
<keyword id="KW-0456">Lyase</keyword>
<keyword id="KW-0460">Magnesium</keyword>
<keyword id="KW-0464">Manganese</keyword>
<keyword id="KW-0479">Metal-binding</keyword>
<keyword id="KW-0686">Riboflavin biosynthesis</keyword>
<feature type="chain" id="PRO_1000118440" description="3,4-dihydroxy-2-butanone 4-phosphate synthase">
    <location>
        <begin position="1"/>
        <end position="217"/>
    </location>
</feature>
<feature type="binding site" evidence="1">
    <location>
        <begin position="37"/>
        <end position="38"/>
    </location>
    <ligand>
        <name>D-ribulose 5-phosphate</name>
        <dbReference type="ChEBI" id="CHEBI:58121"/>
    </ligand>
</feature>
<feature type="binding site" evidence="1">
    <location>
        <position position="38"/>
    </location>
    <ligand>
        <name>Mg(2+)</name>
        <dbReference type="ChEBI" id="CHEBI:18420"/>
        <label>1</label>
    </ligand>
</feature>
<feature type="binding site" evidence="1">
    <location>
        <position position="38"/>
    </location>
    <ligand>
        <name>Mg(2+)</name>
        <dbReference type="ChEBI" id="CHEBI:18420"/>
        <label>2</label>
    </ligand>
</feature>
<feature type="binding site" evidence="1">
    <location>
        <position position="42"/>
    </location>
    <ligand>
        <name>D-ribulose 5-phosphate</name>
        <dbReference type="ChEBI" id="CHEBI:58121"/>
    </ligand>
</feature>
<feature type="binding site" evidence="1">
    <location>
        <begin position="150"/>
        <end position="154"/>
    </location>
    <ligand>
        <name>D-ribulose 5-phosphate</name>
        <dbReference type="ChEBI" id="CHEBI:58121"/>
    </ligand>
</feature>
<feature type="binding site" evidence="1">
    <location>
        <position position="153"/>
    </location>
    <ligand>
        <name>Mg(2+)</name>
        <dbReference type="ChEBI" id="CHEBI:18420"/>
        <label>2</label>
    </ligand>
</feature>
<feature type="binding site" evidence="1">
    <location>
        <position position="174"/>
    </location>
    <ligand>
        <name>D-ribulose 5-phosphate</name>
        <dbReference type="ChEBI" id="CHEBI:58121"/>
    </ligand>
</feature>
<feature type="site" description="Essential for catalytic activity" evidence="1">
    <location>
        <position position="136"/>
    </location>
</feature>
<feature type="site" description="Essential for catalytic activity" evidence="1">
    <location>
        <position position="174"/>
    </location>
</feature>
<proteinExistence type="inferred from homology"/>
<protein>
    <recommendedName>
        <fullName evidence="1">3,4-dihydroxy-2-butanone 4-phosphate synthase</fullName>
        <shortName evidence="1">DHBP synthase</shortName>
        <ecNumber evidence="1">4.1.99.12</ecNumber>
    </recommendedName>
</protein>
<name>RIBB_ESCF3</name>
<gene>
    <name evidence="1" type="primary">ribB</name>
    <name type="ordered locus">EFER_2990</name>
</gene>
<reference key="1">
    <citation type="journal article" date="2009" name="PLoS Genet.">
        <title>Organised genome dynamics in the Escherichia coli species results in highly diverse adaptive paths.</title>
        <authorList>
            <person name="Touchon M."/>
            <person name="Hoede C."/>
            <person name="Tenaillon O."/>
            <person name="Barbe V."/>
            <person name="Baeriswyl S."/>
            <person name="Bidet P."/>
            <person name="Bingen E."/>
            <person name="Bonacorsi S."/>
            <person name="Bouchier C."/>
            <person name="Bouvet O."/>
            <person name="Calteau A."/>
            <person name="Chiapello H."/>
            <person name="Clermont O."/>
            <person name="Cruveiller S."/>
            <person name="Danchin A."/>
            <person name="Diard M."/>
            <person name="Dossat C."/>
            <person name="Karoui M.E."/>
            <person name="Frapy E."/>
            <person name="Garry L."/>
            <person name="Ghigo J.M."/>
            <person name="Gilles A.M."/>
            <person name="Johnson J."/>
            <person name="Le Bouguenec C."/>
            <person name="Lescat M."/>
            <person name="Mangenot S."/>
            <person name="Martinez-Jehanne V."/>
            <person name="Matic I."/>
            <person name="Nassif X."/>
            <person name="Oztas S."/>
            <person name="Petit M.A."/>
            <person name="Pichon C."/>
            <person name="Rouy Z."/>
            <person name="Ruf C.S."/>
            <person name="Schneider D."/>
            <person name="Tourret J."/>
            <person name="Vacherie B."/>
            <person name="Vallenet D."/>
            <person name="Medigue C."/>
            <person name="Rocha E.P.C."/>
            <person name="Denamur E."/>
        </authorList>
    </citation>
    <scope>NUCLEOTIDE SEQUENCE [LARGE SCALE GENOMIC DNA]</scope>
    <source>
        <strain>ATCC 35469 / DSM 13698 / BCRC 15582 / CCUG 18766 / IAM 14443 / JCM 21226 / LMG 7866 / NBRC 102419 / NCTC 12128 / CDC 0568-73</strain>
    </source>
</reference>
<evidence type="ECO:0000255" key="1">
    <source>
        <dbReference type="HAMAP-Rule" id="MF_00180"/>
    </source>
</evidence>
<accession>B7LQC3</accession>
<sequence>MNQTLLSSFGTPFERVENALAALREGRGVMVLDDEDRENEGDMIFPAETMTIEQMALTIRHGSGIVCLCITEDRRKQLDLPMMVENNTSAYGTGFTVTIEAAEGVTTGVSAADRITTVRAAIADGAKPSDLNRPGHVFPLRAQAGGVLTRGGHTEATIDLMTLAGFKPAGVLCELTNDDGTMARAPECIEFANKHNMALVTIEDLVAYRQAHERKAS</sequence>
<dbReference type="EC" id="4.1.99.12" evidence="1"/>
<dbReference type="EMBL" id="CU928158">
    <property type="protein sequence ID" value="CAQ90483.1"/>
    <property type="molecule type" value="Genomic_DNA"/>
</dbReference>
<dbReference type="RefSeq" id="WP_001076985.1">
    <property type="nucleotide sequence ID" value="NC_011740.1"/>
</dbReference>
<dbReference type="SMR" id="B7LQC3"/>
<dbReference type="GeneID" id="75060391"/>
<dbReference type="KEGG" id="efe:EFER_2990"/>
<dbReference type="HOGENOM" id="CLU_020273_3_0_6"/>
<dbReference type="OrthoDB" id="9793111at2"/>
<dbReference type="UniPathway" id="UPA00275">
    <property type="reaction ID" value="UER00399"/>
</dbReference>
<dbReference type="Proteomes" id="UP000000745">
    <property type="component" value="Chromosome"/>
</dbReference>
<dbReference type="GO" id="GO:0005829">
    <property type="term" value="C:cytosol"/>
    <property type="evidence" value="ECO:0007669"/>
    <property type="project" value="TreeGrafter"/>
</dbReference>
<dbReference type="GO" id="GO:0008686">
    <property type="term" value="F:3,4-dihydroxy-2-butanone-4-phosphate synthase activity"/>
    <property type="evidence" value="ECO:0007669"/>
    <property type="project" value="UniProtKB-UniRule"/>
</dbReference>
<dbReference type="GO" id="GO:0000287">
    <property type="term" value="F:magnesium ion binding"/>
    <property type="evidence" value="ECO:0007669"/>
    <property type="project" value="UniProtKB-UniRule"/>
</dbReference>
<dbReference type="GO" id="GO:0030145">
    <property type="term" value="F:manganese ion binding"/>
    <property type="evidence" value="ECO:0007669"/>
    <property type="project" value="UniProtKB-UniRule"/>
</dbReference>
<dbReference type="GO" id="GO:0009231">
    <property type="term" value="P:riboflavin biosynthetic process"/>
    <property type="evidence" value="ECO:0007669"/>
    <property type="project" value="UniProtKB-UniRule"/>
</dbReference>
<dbReference type="FunFam" id="3.90.870.10:FF:000002">
    <property type="entry name" value="3,4-dihydroxy-2-butanone 4-phosphate synthase"/>
    <property type="match status" value="1"/>
</dbReference>
<dbReference type="Gene3D" id="3.90.870.10">
    <property type="entry name" value="DHBP synthase"/>
    <property type="match status" value="1"/>
</dbReference>
<dbReference type="HAMAP" id="MF_00180">
    <property type="entry name" value="RibB"/>
    <property type="match status" value="1"/>
</dbReference>
<dbReference type="InterPro" id="IPR017945">
    <property type="entry name" value="DHBP_synth_RibB-like_a/b_dom"/>
</dbReference>
<dbReference type="InterPro" id="IPR000422">
    <property type="entry name" value="DHBP_synthase_RibB"/>
</dbReference>
<dbReference type="NCBIfam" id="TIGR00506">
    <property type="entry name" value="ribB"/>
    <property type="match status" value="1"/>
</dbReference>
<dbReference type="PANTHER" id="PTHR21327:SF38">
    <property type="entry name" value="3,4-DIHYDROXY-2-BUTANONE 4-PHOSPHATE SYNTHASE"/>
    <property type="match status" value="1"/>
</dbReference>
<dbReference type="PANTHER" id="PTHR21327">
    <property type="entry name" value="GTP CYCLOHYDROLASE II-RELATED"/>
    <property type="match status" value="1"/>
</dbReference>
<dbReference type="Pfam" id="PF00926">
    <property type="entry name" value="DHBP_synthase"/>
    <property type="match status" value="1"/>
</dbReference>
<dbReference type="SUPFAM" id="SSF55821">
    <property type="entry name" value="YrdC/RibB"/>
    <property type="match status" value="1"/>
</dbReference>